<dbReference type="EMBL" id="U20504">
    <property type="protein sequence ID" value="AAC24012.1"/>
    <property type="molecule type" value="mRNA"/>
</dbReference>
<dbReference type="EMBL" id="AF491303">
    <property type="protein sequence ID" value="AAM09535.1"/>
    <property type="molecule type" value="mRNA"/>
</dbReference>
<dbReference type="EMBL" id="U87230">
    <property type="protein sequence ID" value="AAC33486.1"/>
    <property type="molecule type" value="mRNA"/>
</dbReference>
<dbReference type="RefSeq" id="NP_776806.1">
    <molecule id="Q28005-1"/>
    <property type="nucleotide sequence ID" value="NM_174381.1"/>
</dbReference>
<dbReference type="SMR" id="Q28005"/>
<dbReference type="FunCoup" id="Q28005">
    <property type="interactions" value="251"/>
</dbReference>
<dbReference type="STRING" id="9913.ENSBTAP00000022047"/>
<dbReference type="GlyCosmos" id="Q28005">
    <property type="glycosylation" value="6 sites, No reported glycans"/>
</dbReference>
<dbReference type="GlyGen" id="Q28005">
    <property type="glycosylation" value="6 sites"/>
</dbReference>
<dbReference type="PaxDb" id="9913-ENSBTAP00000022047"/>
<dbReference type="GeneID" id="281900"/>
<dbReference type="KEGG" id="bta:281900"/>
<dbReference type="CTD" id="3973"/>
<dbReference type="eggNOG" id="KOG2087">
    <property type="taxonomic scope" value="Eukaryota"/>
</dbReference>
<dbReference type="InParanoid" id="Q28005"/>
<dbReference type="OrthoDB" id="5981530at2759"/>
<dbReference type="TreeFam" id="TF316814"/>
<dbReference type="Proteomes" id="UP000009136">
    <property type="component" value="Unplaced"/>
</dbReference>
<dbReference type="GO" id="GO:0005886">
    <property type="term" value="C:plasma membrane"/>
    <property type="evidence" value="ECO:0000250"/>
    <property type="project" value="UniProtKB"/>
</dbReference>
<dbReference type="GO" id="GO:0008528">
    <property type="term" value="F:G protein-coupled peptide receptor activity"/>
    <property type="evidence" value="ECO:0000318"/>
    <property type="project" value="GO_Central"/>
</dbReference>
<dbReference type="GO" id="GO:0004964">
    <property type="term" value="F:luteinizing hormone receptor activity"/>
    <property type="evidence" value="ECO:0000250"/>
    <property type="project" value="UniProtKB"/>
</dbReference>
<dbReference type="GO" id="GO:0007189">
    <property type="term" value="P:adenylate cyclase-activating G protein-coupled receptor signaling pathway"/>
    <property type="evidence" value="ECO:0000318"/>
    <property type="project" value="GO_Central"/>
</dbReference>
<dbReference type="GO" id="GO:0071373">
    <property type="term" value="P:cellular response to luteinizing hormone stimulus"/>
    <property type="evidence" value="ECO:0000250"/>
    <property type="project" value="UniProtKB"/>
</dbReference>
<dbReference type="GO" id="GO:0009755">
    <property type="term" value="P:hormone-mediated signaling pathway"/>
    <property type="evidence" value="ECO:0000318"/>
    <property type="project" value="GO_Central"/>
</dbReference>
<dbReference type="GO" id="GO:0042700">
    <property type="term" value="P:luteinizing hormone signaling pathway"/>
    <property type="evidence" value="ECO:0000250"/>
    <property type="project" value="UniProtKB"/>
</dbReference>
<dbReference type="GO" id="GO:0008584">
    <property type="term" value="P:male gonad development"/>
    <property type="evidence" value="ECO:0000318"/>
    <property type="project" value="GO_Central"/>
</dbReference>
<dbReference type="GO" id="GO:0001541">
    <property type="term" value="P:ovarian follicle development"/>
    <property type="evidence" value="ECO:0000318"/>
    <property type="project" value="GO_Central"/>
</dbReference>
<dbReference type="GO" id="GO:0022602">
    <property type="term" value="P:ovulation cycle process"/>
    <property type="evidence" value="ECO:0000318"/>
    <property type="project" value="GO_Central"/>
</dbReference>
<dbReference type="GO" id="GO:0007200">
    <property type="term" value="P:phospholipase C-activating G protein-coupled receptor signaling pathway"/>
    <property type="evidence" value="ECO:0000318"/>
    <property type="project" value="GO_Central"/>
</dbReference>
<dbReference type="CDD" id="cd15359">
    <property type="entry name" value="7tmA_LHCGR"/>
    <property type="match status" value="1"/>
</dbReference>
<dbReference type="FunFam" id="1.20.1070.10:FF:000019">
    <property type="entry name" value="Lutropin-choriogonadotropic hormone receptor"/>
    <property type="match status" value="1"/>
</dbReference>
<dbReference type="FunFam" id="3.80.10.10:FF:000128">
    <property type="entry name" value="Lutropin-choriogonadotropic hormone receptor"/>
    <property type="match status" value="1"/>
</dbReference>
<dbReference type="Gene3D" id="1.20.1070.10">
    <property type="entry name" value="Rhodopsin 7-helix transmembrane proteins"/>
    <property type="match status" value="1"/>
</dbReference>
<dbReference type="Gene3D" id="3.80.10.10">
    <property type="entry name" value="Ribonuclease Inhibitor"/>
    <property type="match status" value="1"/>
</dbReference>
<dbReference type="InterPro" id="IPR000276">
    <property type="entry name" value="GPCR_Rhodpsn"/>
</dbReference>
<dbReference type="InterPro" id="IPR017452">
    <property type="entry name" value="GPCR_Rhodpsn_7TM"/>
</dbReference>
<dbReference type="InterPro" id="IPR002131">
    <property type="entry name" value="Gphrmn_rcpt_fam"/>
</dbReference>
<dbReference type="InterPro" id="IPR026906">
    <property type="entry name" value="LRR_5"/>
</dbReference>
<dbReference type="InterPro" id="IPR032675">
    <property type="entry name" value="LRR_dom_sf"/>
</dbReference>
<dbReference type="InterPro" id="IPR002273">
    <property type="entry name" value="LSH_rcpt"/>
</dbReference>
<dbReference type="PANTHER" id="PTHR24372">
    <property type="entry name" value="GLYCOPROTEIN HORMONE RECEPTOR"/>
    <property type="match status" value="1"/>
</dbReference>
<dbReference type="PANTHER" id="PTHR24372:SF1">
    <property type="entry name" value="LUTROPIN-CHORIOGONADOTROPIC HORMONE RECEPTOR"/>
    <property type="match status" value="1"/>
</dbReference>
<dbReference type="Pfam" id="PF00001">
    <property type="entry name" value="7tm_1"/>
    <property type="match status" value="1"/>
</dbReference>
<dbReference type="Pfam" id="PF13306">
    <property type="entry name" value="LRR_5"/>
    <property type="match status" value="2"/>
</dbReference>
<dbReference type="PRINTS" id="PR00373">
    <property type="entry name" value="GLYCHORMONER"/>
</dbReference>
<dbReference type="PRINTS" id="PR00237">
    <property type="entry name" value="GPCRRHODOPSN"/>
</dbReference>
<dbReference type="PRINTS" id="PR01144">
    <property type="entry name" value="LSHRECEPTOR"/>
</dbReference>
<dbReference type="SUPFAM" id="SSF81321">
    <property type="entry name" value="Family A G protein-coupled receptor-like"/>
    <property type="match status" value="1"/>
</dbReference>
<dbReference type="SUPFAM" id="SSF52058">
    <property type="entry name" value="L domain-like"/>
    <property type="match status" value="1"/>
</dbReference>
<dbReference type="PROSITE" id="PS00237">
    <property type="entry name" value="G_PROTEIN_RECEP_F1_1"/>
    <property type="match status" value="1"/>
</dbReference>
<dbReference type="PROSITE" id="PS50262">
    <property type="entry name" value="G_PROTEIN_RECEP_F1_2"/>
    <property type="match status" value="1"/>
</dbReference>
<accession>Q28005</accession>
<accession>P79133</accession>
<accession>Q8SPS8</accession>
<reference key="1">
    <citation type="submission" date="1995-03" db="EMBL/GenBank/DDBJ databases">
        <authorList>
            <person name="Lussier J.G."/>
            <person name="Houde A."/>
            <person name="Ethier J.-F."/>
            <person name="Silversides D.W."/>
        </authorList>
    </citation>
    <scope>NUCLEOTIDE SEQUENCE [MRNA] (ISOFORM LONG)</scope>
    <source>
        <strain>Holstein</strain>
        <tissue>Ovary</tissue>
        <tissue>Testis</tissue>
    </source>
</reference>
<reference key="2">
    <citation type="submission" date="2002-03" db="EMBL/GenBank/DDBJ databases">
        <title>Expression of a cloned full-length cDNA encoding bovine luteinizing hormone receptor in COS-7 cells.</title>
        <authorList>
            <person name="Kawate N."/>
            <person name="Tamada H."/>
            <person name="Inaba T."/>
            <person name="Sawada T."/>
        </authorList>
    </citation>
    <scope>NUCLEOTIDE SEQUENCE [MRNA] (ISOFORM LONG)</scope>
    <source>
        <strain>Holstein</strain>
        <tissue>Corpus luteum</tissue>
    </source>
</reference>
<reference key="3">
    <citation type="journal article" date="1998" name="Domest. Anim. Endocrinol.">
        <title>LH receptor mRNA and cytochrome P450 side-chain cleavage expression in bovine theca and granulosa cells luteinized by LH or forskolin.</title>
        <authorList>
            <person name="Mamluk R."/>
            <person name="Wolfenson D."/>
            <person name="Meidan R."/>
        </authorList>
    </citation>
    <scope>NUCLEOTIDE SEQUENCE [MRNA] OF 80-701 (ISOFORM LONG)</scope>
</reference>
<evidence type="ECO:0000250" key="1"/>
<evidence type="ECO:0000250" key="2">
    <source>
        <dbReference type="UniProtKB" id="P22888"/>
    </source>
</evidence>
<evidence type="ECO:0000255" key="3"/>
<evidence type="ECO:0000255" key="4">
    <source>
        <dbReference type="PROSITE-ProRule" id="PRU00521"/>
    </source>
</evidence>
<evidence type="ECO:0000305" key="5"/>
<name>LSHR_BOVIN</name>
<feature type="signal peptide" evidence="3">
    <location>
        <begin position="1"/>
        <end position="26"/>
    </location>
</feature>
<feature type="chain" id="PRO_0000012778" description="Lutropin-choriogonadotropic hormone receptor">
    <location>
        <begin position="27"/>
        <end position="701"/>
    </location>
</feature>
<feature type="topological domain" description="Extracellular" evidence="3">
    <location>
        <begin position="27"/>
        <end position="365"/>
    </location>
</feature>
<feature type="transmembrane region" description="Helical; Name=1" evidence="3">
    <location>
        <begin position="366"/>
        <end position="387"/>
    </location>
</feature>
<feature type="topological domain" description="Cytoplasmic" evidence="3">
    <location>
        <begin position="388"/>
        <end position="397"/>
    </location>
</feature>
<feature type="transmembrane region" description="Helical; Name=2" evidence="3">
    <location>
        <begin position="398"/>
        <end position="418"/>
    </location>
</feature>
<feature type="topological domain" description="Extracellular" evidence="3">
    <location>
        <begin position="419"/>
        <end position="441"/>
    </location>
</feature>
<feature type="transmembrane region" description="Helical; Name=3" evidence="3">
    <location>
        <begin position="442"/>
        <end position="464"/>
    </location>
</feature>
<feature type="topological domain" description="Cytoplasmic" evidence="3">
    <location>
        <begin position="465"/>
        <end position="484"/>
    </location>
</feature>
<feature type="transmembrane region" description="Helical; Name=4" evidence="3">
    <location>
        <begin position="485"/>
        <end position="507"/>
    </location>
</feature>
<feature type="topological domain" description="Extracellular" evidence="3">
    <location>
        <begin position="508"/>
        <end position="527"/>
    </location>
</feature>
<feature type="transmembrane region" description="Helical; Name=5" evidence="3">
    <location>
        <begin position="528"/>
        <end position="551"/>
    </location>
</feature>
<feature type="topological domain" description="Cytoplasmic" evidence="3">
    <location>
        <begin position="552"/>
        <end position="572"/>
    </location>
</feature>
<feature type="transmembrane region" description="Helical; Name=6" evidence="3">
    <location>
        <begin position="573"/>
        <end position="596"/>
    </location>
</feature>
<feature type="topological domain" description="Extracellular" evidence="3">
    <location>
        <begin position="597"/>
        <end position="607"/>
    </location>
</feature>
<feature type="transmembrane region" description="Helical; Name=7" evidence="3">
    <location>
        <begin position="608"/>
        <end position="629"/>
    </location>
</feature>
<feature type="topological domain" description="Cytoplasmic" evidence="3">
    <location>
        <begin position="630"/>
        <end position="701"/>
    </location>
</feature>
<feature type="repeat" description="LRR 1">
    <location>
        <begin position="124"/>
        <end position="149"/>
    </location>
</feature>
<feature type="repeat" description="LRR 2">
    <location>
        <begin position="151"/>
        <end position="173"/>
    </location>
</feature>
<feature type="repeat" description="LRR 3">
    <location>
        <begin position="174"/>
        <end position="198"/>
    </location>
</feature>
<feature type="repeat" description="LRR 4">
    <location>
        <begin position="200"/>
        <end position="222"/>
    </location>
</feature>
<feature type="repeat" description="LRR 5">
    <location>
        <begin position="223"/>
        <end position="246"/>
    </location>
</feature>
<feature type="repeat" description="LRR 6">
    <location>
        <begin position="250"/>
        <end position="271"/>
    </location>
</feature>
<feature type="modified residue" description="Sulfotyrosine" evidence="2">
    <location>
        <position position="333"/>
    </location>
</feature>
<feature type="lipid moiety-binding region" description="S-palmitoyl cysteine" evidence="1">
    <location>
        <position position="645"/>
    </location>
</feature>
<feature type="lipid moiety-binding region" description="S-palmitoyl cysteine" evidence="1">
    <location>
        <position position="646"/>
    </location>
</feature>
<feature type="glycosylation site" description="N-linked (GlcNAc...) asparagine" evidence="3">
    <location>
        <position position="101"/>
    </location>
</feature>
<feature type="glycosylation site" description="N-linked (GlcNAc...) asparagine" evidence="3">
    <location>
        <position position="176"/>
    </location>
</feature>
<feature type="glycosylation site" description="N-linked (GlcNAc...) asparagine" evidence="3">
    <location>
        <position position="197"/>
    </location>
</feature>
<feature type="glycosylation site" description="N-linked (GlcNAc...) asparagine" evidence="3">
    <location>
        <position position="293"/>
    </location>
</feature>
<feature type="glycosylation site" description="N-linked (GlcNAc...) asparagine" evidence="3">
    <location>
        <position position="301"/>
    </location>
</feature>
<feature type="glycosylation site" description="N-linked (GlcNAc...) asparagine" evidence="3">
    <location>
        <position position="315"/>
    </location>
</feature>
<feature type="disulfide bond" evidence="4">
    <location>
        <begin position="441"/>
        <end position="516"/>
    </location>
</feature>
<feature type="splice variant" id="VSP_001961" description="In isoform Short." evidence="5">
    <location>
        <begin position="229"/>
        <end position="291"/>
    </location>
</feature>
<feature type="sequence conflict" description="In Ref. 2; AAM09535." evidence="5" ref="2">
    <original>K</original>
    <variation>Q</variation>
    <location>
        <position position="235"/>
    </location>
</feature>
<feature type="sequence conflict" description="In Ref. 3; AAC33486." evidence="5" ref="3">
    <original>N</original>
    <variation>D</variation>
    <location>
        <position position="557"/>
    </location>
</feature>
<feature type="sequence conflict" description="In Ref. 3; AAC33486." evidence="5" ref="3">
    <original>I</original>
    <variation>T</variation>
    <location>
        <position position="577"/>
    </location>
</feature>
<feature type="sequence conflict" description="In Ref. 3; AAC33486." evidence="5" ref="3">
    <original>F</original>
    <variation>S</variation>
    <location>
        <position position="589"/>
    </location>
</feature>
<gene>
    <name type="primary">LHCGR</name>
</gene>
<comment type="function">
    <text evidence="2">Receptor for lutropin-choriogonadotropic hormone. The activity of this receptor is mediated by G proteins which activate adenylate cyclase.</text>
</comment>
<comment type="subcellular location">
    <subcellularLocation>
        <location evidence="2">Cell membrane</location>
        <topology evidence="2">Multi-pass membrane protein</topology>
    </subcellularLocation>
</comment>
<comment type="alternative products">
    <event type="alternative splicing"/>
    <isoform>
        <id>Q28005-1</id>
        <name>Long</name>
        <sequence type="displayed"/>
    </isoform>
    <isoform>
        <id>Q28005-2</id>
        <name>Short</name>
        <sequence type="described" ref="VSP_001961"/>
    </isoform>
</comment>
<comment type="PTM">
    <text evidence="2">Sulfated.</text>
</comment>
<comment type="similarity">
    <text evidence="4">Belongs to the G-protein coupled receptor 1 family. FSH/LSH/TSH subfamily.</text>
</comment>
<organism>
    <name type="scientific">Bos taurus</name>
    <name type="common">Bovine</name>
    <dbReference type="NCBI Taxonomy" id="9913"/>
    <lineage>
        <taxon>Eukaryota</taxon>
        <taxon>Metazoa</taxon>
        <taxon>Chordata</taxon>
        <taxon>Craniata</taxon>
        <taxon>Vertebrata</taxon>
        <taxon>Euteleostomi</taxon>
        <taxon>Mammalia</taxon>
        <taxon>Eutheria</taxon>
        <taxon>Laurasiatheria</taxon>
        <taxon>Artiodactyla</taxon>
        <taxon>Ruminantia</taxon>
        <taxon>Pecora</taxon>
        <taxon>Bovidae</taxon>
        <taxon>Bovinae</taxon>
        <taxon>Bos</taxon>
    </lineage>
</organism>
<proteinExistence type="evidence at transcript level"/>
<sequence>MGRPSLALRLLLALLLLPPPAPLLWALRPAPCPEPCSCPPDGALRCPGPQAGLSRLSLTYLPIKVIPSQAFRGLNEVIKIEISQSDSLEKIEANAFDNLLNLSEILIQNTKNLVHIEAGAFTNLPRLKYLSICNTGIHKLPDVTKIFSSEFNFILEICDNLHITTIPRNAFQGMNNESITLKLYGNGFEEIQSHAFNGTTLISLELKENARLEKMHNDAFRGATGPSILDISSTKLQALPTYGLESIQTLIATSSYSLKKLPSREKFTNLLDATLTYPSHCCAFRNLPTNEQNFSFSIFKNFSKQCESTARRPNNETLYSAIFAESELSGWDYDYGFCLPKTLQCAPEPDAFNPCEDIMGYNFLRVLIWLINILAITGNVTVLFVLLTSRYKLTVPRFLMCNLSFADFCMGLYLLLIASVDAQTKGQYYNHAIDWQTGSGCSAAGFFTVFASELSVYTLTVITLERWHTITYAIQLDQKLRLKHAIPVMLGGWLFSTLIAVLPLVGVSNYMKVSICLPMDVESTLSQVYILTILILNVMAFIIICACYIKIYFAVQNPELMATNKDTKIAKKMAVLIFTDFTCMAPISFFAISAAFKVPLITVTNSKVLLVLFYPVNSCANPFLYAIFTKAFQRDFFLLLSKFGCCKYRAELYRRKDFSAYISNCKNGFTGSNKPSRSTFKLTTLQCQYSAVLDKTCYKEC</sequence>
<keyword id="KW-0025">Alternative splicing</keyword>
<keyword id="KW-1003">Cell membrane</keyword>
<keyword id="KW-1015">Disulfide bond</keyword>
<keyword id="KW-0297">G-protein coupled receptor</keyword>
<keyword id="KW-0325">Glycoprotein</keyword>
<keyword id="KW-0433">Leucine-rich repeat</keyword>
<keyword id="KW-0449">Lipoprotein</keyword>
<keyword id="KW-0472">Membrane</keyword>
<keyword id="KW-0564">Palmitate</keyword>
<keyword id="KW-0675">Receptor</keyword>
<keyword id="KW-1185">Reference proteome</keyword>
<keyword id="KW-0677">Repeat</keyword>
<keyword id="KW-0732">Signal</keyword>
<keyword id="KW-0765">Sulfation</keyword>
<keyword id="KW-0807">Transducer</keyword>
<keyword id="KW-0812">Transmembrane</keyword>
<keyword id="KW-1133">Transmembrane helix</keyword>
<protein>
    <recommendedName>
        <fullName>Lutropin-choriogonadotropic hormone receptor</fullName>
        <shortName>LH/CG-R</shortName>
    </recommendedName>
    <alternativeName>
        <fullName>Luteinizing hormone receptor</fullName>
        <shortName>LSH-R</shortName>
    </alternativeName>
</protein>